<name>MAD3_SCHPO</name>
<proteinExistence type="evidence at protein level"/>
<comment type="function">
    <text evidence="3">Component of the spindle assembly checkpoint which is a feedback control that prevents cells with incompletely assembled spindles from leaving mitosis. Component of the mitotic checkpoint complex (MCC) which inhibits the ubiquitin ligase activity of the anaphase promoting complex/cyclosome (APC/C) by preventing its activation by slp1/cdc20.</text>
</comment>
<comment type="subunit">
    <text evidence="3 4">Component of the mitotic checkpoint complex (MCC) which consists of mad2, mad3, bub3 and slp1/cdc20 (PubMed:11909965). Interacts with the chromosome passenger complex subunits ark1 and bir1 (PubMed:12676091).</text>
</comment>
<comment type="interaction">
    <interactant intactId="EBI-1269284">
        <id>O59767</id>
    </interactant>
    <interactant intactId="EBI-1269310">
        <id>O14417</id>
        <label>mad2</label>
    </interactant>
    <organismsDiffer>false</organismsDiffer>
    <experiments>5</experiments>
</comment>
<comment type="subcellular location">
    <subcellularLocation>
        <location evidence="3 5">Nucleus</location>
    </subcellularLocation>
    <subcellularLocation>
        <location evidence="3 5">Chromosome</location>
        <location evidence="3 5">Centromere</location>
        <location evidence="3 5">Kinetochore</location>
    </subcellularLocation>
</comment>
<gene>
    <name type="primary">mad3</name>
    <name type="ORF">SPCC1795.01c</name>
    <name type="ORF">SPCC895.02</name>
</gene>
<protein>
    <recommendedName>
        <fullName>Mitotic spindle checkpoint component mad3</fullName>
    </recommendedName>
</protein>
<reference key="1">
    <citation type="journal article" date="2002" name="Nature">
        <title>The genome sequence of Schizosaccharomyces pombe.</title>
        <authorList>
            <person name="Wood V."/>
            <person name="Gwilliam R."/>
            <person name="Rajandream M.A."/>
            <person name="Lyne M.H."/>
            <person name="Lyne R."/>
            <person name="Stewart A."/>
            <person name="Sgouros J.G."/>
            <person name="Peat N."/>
            <person name="Hayles J."/>
            <person name="Baker S.G."/>
            <person name="Basham D."/>
            <person name="Bowman S."/>
            <person name="Brooks K."/>
            <person name="Brown D."/>
            <person name="Brown S."/>
            <person name="Chillingworth T."/>
            <person name="Churcher C.M."/>
            <person name="Collins M."/>
            <person name="Connor R."/>
            <person name="Cronin A."/>
            <person name="Davis P."/>
            <person name="Feltwell T."/>
            <person name="Fraser A."/>
            <person name="Gentles S."/>
            <person name="Goble A."/>
            <person name="Hamlin N."/>
            <person name="Harris D.E."/>
            <person name="Hidalgo J."/>
            <person name="Hodgson G."/>
            <person name="Holroyd S."/>
            <person name="Hornsby T."/>
            <person name="Howarth S."/>
            <person name="Huckle E.J."/>
            <person name="Hunt S."/>
            <person name="Jagels K."/>
            <person name="James K.D."/>
            <person name="Jones L."/>
            <person name="Jones M."/>
            <person name="Leather S."/>
            <person name="McDonald S."/>
            <person name="McLean J."/>
            <person name="Mooney P."/>
            <person name="Moule S."/>
            <person name="Mungall K.L."/>
            <person name="Murphy L.D."/>
            <person name="Niblett D."/>
            <person name="Odell C."/>
            <person name="Oliver K."/>
            <person name="O'Neil S."/>
            <person name="Pearson D."/>
            <person name="Quail M.A."/>
            <person name="Rabbinowitsch E."/>
            <person name="Rutherford K.M."/>
            <person name="Rutter S."/>
            <person name="Saunders D."/>
            <person name="Seeger K."/>
            <person name="Sharp S."/>
            <person name="Skelton J."/>
            <person name="Simmonds M.N."/>
            <person name="Squares R."/>
            <person name="Squares S."/>
            <person name="Stevens K."/>
            <person name="Taylor K."/>
            <person name="Taylor R.G."/>
            <person name="Tivey A."/>
            <person name="Walsh S.V."/>
            <person name="Warren T."/>
            <person name="Whitehead S."/>
            <person name="Woodward J.R."/>
            <person name="Volckaert G."/>
            <person name="Aert R."/>
            <person name="Robben J."/>
            <person name="Grymonprez B."/>
            <person name="Weltjens I."/>
            <person name="Vanstreels E."/>
            <person name="Rieger M."/>
            <person name="Schaefer M."/>
            <person name="Mueller-Auer S."/>
            <person name="Gabel C."/>
            <person name="Fuchs M."/>
            <person name="Duesterhoeft A."/>
            <person name="Fritzc C."/>
            <person name="Holzer E."/>
            <person name="Moestl D."/>
            <person name="Hilbert H."/>
            <person name="Borzym K."/>
            <person name="Langer I."/>
            <person name="Beck A."/>
            <person name="Lehrach H."/>
            <person name="Reinhardt R."/>
            <person name="Pohl T.M."/>
            <person name="Eger P."/>
            <person name="Zimmermann W."/>
            <person name="Wedler H."/>
            <person name="Wambutt R."/>
            <person name="Purnelle B."/>
            <person name="Goffeau A."/>
            <person name="Cadieu E."/>
            <person name="Dreano S."/>
            <person name="Gloux S."/>
            <person name="Lelaure V."/>
            <person name="Mottier S."/>
            <person name="Galibert F."/>
            <person name="Aves S.J."/>
            <person name="Xiang Z."/>
            <person name="Hunt C."/>
            <person name="Moore K."/>
            <person name="Hurst S.M."/>
            <person name="Lucas M."/>
            <person name="Rochet M."/>
            <person name="Gaillardin C."/>
            <person name="Tallada V.A."/>
            <person name="Garzon A."/>
            <person name="Thode G."/>
            <person name="Daga R.R."/>
            <person name="Cruzado L."/>
            <person name="Jimenez J."/>
            <person name="Sanchez M."/>
            <person name="del Rey F."/>
            <person name="Benito J."/>
            <person name="Dominguez A."/>
            <person name="Revuelta J.L."/>
            <person name="Moreno S."/>
            <person name="Armstrong J."/>
            <person name="Forsburg S.L."/>
            <person name="Cerutti L."/>
            <person name="Lowe T."/>
            <person name="McCombie W.R."/>
            <person name="Paulsen I."/>
            <person name="Potashkin J."/>
            <person name="Shpakovski G.V."/>
            <person name="Ussery D."/>
            <person name="Barrell B.G."/>
            <person name="Nurse P."/>
        </authorList>
    </citation>
    <scope>NUCLEOTIDE SEQUENCE [LARGE SCALE GENOMIC DNA]</scope>
    <source>
        <strain>972 / ATCC 24843</strain>
    </source>
</reference>
<reference key="2">
    <citation type="journal article" date="2002" name="Mol. Cell. Biol.">
        <title>Fission yeast Mad3p is required for Mad2p to inhibit the anaphase-promoting complex and localizes to kinetochores in a Bub1p-, Bub3p-, and Mph1p-dependent manner.</title>
        <authorList>
            <person name="Millband D.N."/>
            <person name="Hardwick K.G."/>
        </authorList>
    </citation>
    <scope>FUNCTION</scope>
    <scope>INTERACTION WITH BUB3; MAD2 AND SLP1</scope>
    <scope>SUBCELLULAR LOCATION</scope>
</reference>
<reference key="3">
    <citation type="journal article" date="2003" name="Curr. Biol.">
        <title>S. pombe aurora kinase/survivin is required for chromosome condensation and the spindle checkpoint attachment response.</title>
        <authorList>
            <person name="Petersen J."/>
            <person name="Hagan I.M."/>
        </authorList>
    </citation>
    <scope>INTERACTION WITH ARK1 AND BIR1</scope>
</reference>
<reference key="4">
    <citation type="journal article" date="2012" name="Nat. Cell Biol.">
        <title>MPS1/Mph1 phosphorylates the kinetochore protein KNL1/Spc7 to recruit SAC components.</title>
        <authorList>
            <person name="Yamagishi Y."/>
            <person name="Yang C.H."/>
            <person name="Tanno Y."/>
            <person name="Watanabe Y."/>
        </authorList>
    </citation>
    <scope>SUBCELLULAR LOCATION</scope>
</reference>
<accession>O59767</accession>
<organism>
    <name type="scientific">Schizosaccharomyces pombe (strain 972 / ATCC 24843)</name>
    <name type="common">Fission yeast</name>
    <dbReference type="NCBI Taxonomy" id="284812"/>
    <lineage>
        <taxon>Eukaryota</taxon>
        <taxon>Fungi</taxon>
        <taxon>Dikarya</taxon>
        <taxon>Ascomycota</taxon>
        <taxon>Taphrinomycotina</taxon>
        <taxon>Schizosaccharomycetes</taxon>
        <taxon>Schizosaccharomycetales</taxon>
        <taxon>Schizosaccharomycetaceae</taxon>
        <taxon>Schizosaccharomyces</taxon>
    </lineage>
</organism>
<dbReference type="EMBL" id="CU329672">
    <property type="protein sequence ID" value="CAA18636.2"/>
    <property type="molecule type" value="Genomic_DNA"/>
</dbReference>
<dbReference type="PIR" id="T41640">
    <property type="entry name" value="T41640"/>
</dbReference>
<dbReference type="RefSeq" id="NP_588043.2">
    <property type="nucleotide sequence ID" value="NM_001023035.2"/>
</dbReference>
<dbReference type="PDB" id="4AEZ">
    <property type="method" value="X-ray"/>
    <property type="resolution" value="2.30 A"/>
    <property type="chains" value="C/F/I=1-223"/>
</dbReference>
<dbReference type="PDBsum" id="4AEZ"/>
<dbReference type="SMR" id="O59767"/>
<dbReference type="BioGRID" id="275789">
    <property type="interactions" value="53"/>
</dbReference>
<dbReference type="ComplexPortal" id="CPX-3924">
    <property type="entry name" value="Mitotic Checkpoint Complex"/>
</dbReference>
<dbReference type="DIP" id="DIP-39397N"/>
<dbReference type="FunCoup" id="O59767">
    <property type="interactions" value="176"/>
</dbReference>
<dbReference type="IntAct" id="O59767">
    <property type="interactions" value="5"/>
</dbReference>
<dbReference type="STRING" id="284812.O59767"/>
<dbReference type="iPTMnet" id="O59767"/>
<dbReference type="PaxDb" id="4896-SPCC1795.01c.1"/>
<dbReference type="EnsemblFungi" id="SPCC1795.01c.1">
    <property type="protein sequence ID" value="SPCC1795.01c.1:pep"/>
    <property type="gene ID" value="SPCC1795.01c"/>
</dbReference>
<dbReference type="GeneID" id="2539219"/>
<dbReference type="KEGG" id="spo:2539219"/>
<dbReference type="PomBase" id="SPCC1795.01c">
    <property type="gene designation" value="mad3"/>
</dbReference>
<dbReference type="VEuPathDB" id="FungiDB:SPCC1795.01c"/>
<dbReference type="eggNOG" id="KOG1166">
    <property type="taxonomic scope" value="Eukaryota"/>
</dbReference>
<dbReference type="HOGENOM" id="CLU_043742_0_0_1"/>
<dbReference type="InParanoid" id="O59767"/>
<dbReference type="OMA" id="LRIWMQY"/>
<dbReference type="PhylomeDB" id="O59767"/>
<dbReference type="EvolutionaryTrace" id="O59767"/>
<dbReference type="PRO" id="PR:O59767"/>
<dbReference type="Proteomes" id="UP000002485">
    <property type="component" value="Chromosome III"/>
</dbReference>
<dbReference type="GO" id="GO:0005829">
    <property type="term" value="C:cytosol"/>
    <property type="evidence" value="ECO:0007005"/>
    <property type="project" value="PomBase"/>
</dbReference>
<dbReference type="GO" id="GO:0000776">
    <property type="term" value="C:kinetochore"/>
    <property type="evidence" value="ECO:0000303"/>
    <property type="project" value="ComplexPortal"/>
</dbReference>
<dbReference type="GO" id="GO:0033597">
    <property type="term" value="C:mitotic checkpoint complex"/>
    <property type="evidence" value="ECO:0000314"/>
    <property type="project" value="PomBase"/>
</dbReference>
<dbReference type="GO" id="GO:0005634">
    <property type="term" value="C:nucleus"/>
    <property type="evidence" value="ECO:0007005"/>
    <property type="project" value="PomBase"/>
</dbReference>
<dbReference type="GO" id="GO:0010997">
    <property type="term" value="F:anaphase-promoting complex binding"/>
    <property type="evidence" value="ECO:0000353"/>
    <property type="project" value="PomBase"/>
</dbReference>
<dbReference type="GO" id="GO:1990948">
    <property type="term" value="F:ubiquitin ligase inhibitor activity"/>
    <property type="evidence" value="ECO:0000314"/>
    <property type="project" value="PomBase"/>
</dbReference>
<dbReference type="GO" id="GO:0051301">
    <property type="term" value="P:cell division"/>
    <property type="evidence" value="ECO:0007669"/>
    <property type="project" value="UniProtKB-KW"/>
</dbReference>
<dbReference type="GO" id="GO:0007094">
    <property type="term" value="P:mitotic spindle assembly checkpoint signaling"/>
    <property type="evidence" value="ECO:0000315"/>
    <property type="project" value="PomBase"/>
</dbReference>
<dbReference type="GO" id="GO:0045841">
    <property type="term" value="P:negative regulation of mitotic metaphase/anaphase transition"/>
    <property type="evidence" value="ECO:0000353"/>
    <property type="project" value="PomBase"/>
</dbReference>
<dbReference type="FunFam" id="1.25.40.430:FF:000004">
    <property type="entry name" value="Mitotic spindle checkpoint protein BUBR1"/>
    <property type="match status" value="1"/>
</dbReference>
<dbReference type="Gene3D" id="1.25.40.430">
    <property type="match status" value="1"/>
</dbReference>
<dbReference type="InterPro" id="IPR015661">
    <property type="entry name" value="Bub1/Mad3"/>
</dbReference>
<dbReference type="InterPro" id="IPR013212">
    <property type="entry name" value="Mad3/Bub1_I"/>
</dbReference>
<dbReference type="InterPro" id="IPR011990">
    <property type="entry name" value="TPR-like_helical_dom_sf"/>
</dbReference>
<dbReference type="PANTHER" id="PTHR14030:SF4">
    <property type="entry name" value="BUB1 KINASE, ISOFORM A-RELATED"/>
    <property type="match status" value="1"/>
</dbReference>
<dbReference type="PANTHER" id="PTHR14030">
    <property type="entry name" value="MITOTIC CHECKPOINT SERINE/THREONINE-PROTEIN KINASE BUB1"/>
    <property type="match status" value="1"/>
</dbReference>
<dbReference type="Pfam" id="PF08311">
    <property type="entry name" value="Mad3_BUB1_I"/>
    <property type="match status" value="1"/>
</dbReference>
<dbReference type="SMART" id="SM00777">
    <property type="entry name" value="Mad3_BUB1_I"/>
    <property type="match status" value="1"/>
</dbReference>
<dbReference type="SUPFAM" id="SSF48452">
    <property type="entry name" value="TPR-like"/>
    <property type="match status" value="1"/>
</dbReference>
<dbReference type="PROSITE" id="PS51489">
    <property type="entry name" value="BUB1_N"/>
    <property type="match status" value="1"/>
</dbReference>
<sequence>MEPLDAGKNWVHMDVIEQSKENIEPRKAGHSASALAKSSSRNHTEKEVAGLQKERMGHERKIETSESLDDPLQVWIDYIKWTLDNFPQGETKTSGLVTLLERCTREFVRNPLYKDDVRYLRIWMQYVNYIDEPVELFSFLAHHHIGQESSIFYEEYANYFESRGLFQKADEVYQKGKRMKAKPFLRFQQKYQQFTHRWLEFAPQSFSSNTNSVNPLQTTFESTNIQEISQSRTKISKPKFKFSVYSDADGSGKDGQPGTWQTLGTVDQRRKENNISATSWVGEKLPLKSPRKLDPLGKFQVHCDEEVSKE</sequence>
<keyword id="KW-0002">3D-structure</keyword>
<keyword id="KW-0131">Cell cycle</keyword>
<keyword id="KW-0132">Cell division</keyword>
<keyword id="KW-0137">Centromere</keyword>
<keyword id="KW-0158">Chromosome</keyword>
<keyword id="KW-0995">Kinetochore</keyword>
<keyword id="KW-0498">Mitosis</keyword>
<keyword id="KW-0539">Nucleus</keyword>
<keyword id="KW-1185">Reference proteome</keyword>
<evidence type="ECO:0000255" key="1">
    <source>
        <dbReference type="PROSITE-ProRule" id="PRU00822"/>
    </source>
</evidence>
<evidence type="ECO:0000256" key="2">
    <source>
        <dbReference type="SAM" id="MobiDB-lite"/>
    </source>
</evidence>
<evidence type="ECO:0000269" key="3">
    <source>
    </source>
</evidence>
<evidence type="ECO:0000269" key="4">
    <source>
    </source>
</evidence>
<evidence type="ECO:0000269" key="5">
    <source>
    </source>
</evidence>
<evidence type="ECO:0007829" key="6">
    <source>
        <dbReference type="PDB" id="4AEZ"/>
    </source>
</evidence>
<feature type="chain" id="PRO_0000084548" description="Mitotic spindle checkpoint component mad3">
    <location>
        <begin position="1"/>
        <end position="310"/>
    </location>
</feature>
<feature type="domain" description="BUB1 N-terminal" evidence="1">
    <location>
        <begin position="56"/>
        <end position="218"/>
    </location>
</feature>
<feature type="region of interest" description="Disordered" evidence="2">
    <location>
        <begin position="20"/>
        <end position="63"/>
    </location>
</feature>
<feature type="compositionally biased region" description="Basic and acidic residues" evidence="2">
    <location>
        <begin position="42"/>
        <end position="63"/>
    </location>
</feature>
<feature type="helix" evidence="6">
    <location>
        <begin position="13"/>
        <end position="18"/>
    </location>
</feature>
<feature type="helix" evidence="6">
    <location>
        <begin position="19"/>
        <end position="22"/>
    </location>
</feature>
<feature type="helix" evidence="6">
    <location>
        <begin position="32"/>
        <end position="39"/>
    </location>
</feature>
<feature type="helix" evidence="6">
    <location>
        <begin position="45"/>
        <end position="64"/>
    </location>
</feature>
<feature type="helix" evidence="6">
    <location>
        <begin position="65"/>
        <end position="67"/>
    </location>
</feature>
<feature type="helix" evidence="6">
    <location>
        <begin position="72"/>
        <end position="85"/>
    </location>
</feature>
<feature type="turn" evidence="6">
    <location>
        <begin position="92"/>
        <end position="94"/>
    </location>
</feature>
<feature type="helix" evidence="6">
    <location>
        <begin position="96"/>
        <end position="106"/>
    </location>
</feature>
<feature type="turn" evidence="6">
    <location>
        <begin position="107"/>
        <end position="109"/>
    </location>
</feature>
<feature type="helix" evidence="6">
    <location>
        <begin position="111"/>
        <end position="113"/>
    </location>
</feature>
<feature type="helix" evidence="6">
    <location>
        <begin position="117"/>
        <end position="127"/>
    </location>
</feature>
<feature type="helix" evidence="6">
    <location>
        <begin position="133"/>
        <end position="142"/>
    </location>
</feature>
<feature type="helix" evidence="6">
    <location>
        <begin position="150"/>
        <end position="162"/>
    </location>
</feature>
<feature type="helix" evidence="6">
    <location>
        <begin position="166"/>
        <end position="179"/>
    </location>
</feature>
<feature type="helix" evidence="6">
    <location>
        <begin position="184"/>
        <end position="201"/>
    </location>
</feature>
<feature type="helix" evidence="6">
    <location>
        <begin position="203"/>
        <end position="205"/>
    </location>
</feature>